<keyword id="KW-0067">ATP-binding</keyword>
<keyword id="KW-0963">Cytoplasm</keyword>
<keyword id="KW-0227">DNA damage</keyword>
<keyword id="KW-0233">DNA recombination</keyword>
<keyword id="KW-0234">DNA repair</keyword>
<keyword id="KW-0238">DNA-binding</keyword>
<keyword id="KW-0378">Hydrolase</keyword>
<keyword id="KW-0547">Nucleotide-binding</keyword>
<keyword id="KW-1185">Reference proteome</keyword>
<protein>
    <recommendedName>
        <fullName evidence="1">Holliday junction branch migration complex subunit RuvB</fullName>
        <ecNumber evidence="1">3.6.4.-</ecNumber>
    </recommendedName>
</protein>
<name>RUVB_POLNA</name>
<gene>
    <name evidence="1" type="primary">ruvB</name>
    <name type="ordered locus">Pnap_0512</name>
</gene>
<comment type="function">
    <text evidence="1">The RuvA-RuvB-RuvC complex processes Holliday junction (HJ) DNA during genetic recombination and DNA repair, while the RuvA-RuvB complex plays an important role in the rescue of blocked DNA replication forks via replication fork reversal (RFR). RuvA specifically binds to HJ cruciform DNA, conferring on it an open structure. The RuvB hexamer acts as an ATP-dependent pump, pulling dsDNA into and through the RuvAB complex. RuvB forms 2 homohexamers on either side of HJ DNA bound by 1 or 2 RuvA tetramers; 4 subunits per hexamer contact DNA at a time. Coordinated motions by a converter formed by DNA-disengaged RuvB subunits stimulates ATP hydrolysis and nucleotide exchange. Immobilization of the converter enables RuvB to convert the ATP-contained energy into a lever motion, pulling 2 nucleotides of DNA out of the RuvA tetramer per ATP hydrolyzed, thus driving DNA branch migration. The RuvB motors rotate together with the DNA substrate, which together with the progressing nucleotide cycle form the mechanistic basis for DNA recombination by continuous HJ branch migration. Branch migration allows RuvC to scan DNA until it finds its consensus sequence, where it cleaves and resolves cruciform DNA.</text>
</comment>
<comment type="catalytic activity">
    <reaction evidence="1">
        <text>ATP + H2O = ADP + phosphate + H(+)</text>
        <dbReference type="Rhea" id="RHEA:13065"/>
        <dbReference type="ChEBI" id="CHEBI:15377"/>
        <dbReference type="ChEBI" id="CHEBI:15378"/>
        <dbReference type="ChEBI" id="CHEBI:30616"/>
        <dbReference type="ChEBI" id="CHEBI:43474"/>
        <dbReference type="ChEBI" id="CHEBI:456216"/>
    </reaction>
</comment>
<comment type="subunit">
    <text evidence="1">Homohexamer. Forms an RuvA(8)-RuvB(12)-Holliday junction (HJ) complex. HJ DNA is sandwiched between 2 RuvA tetramers; dsDNA enters through RuvA and exits via RuvB. An RuvB hexamer assembles on each DNA strand where it exits the tetramer. Each RuvB hexamer is contacted by two RuvA subunits (via domain III) on 2 adjacent RuvB subunits; this complex drives branch migration. In the full resolvosome a probable DNA-RuvA(4)-RuvB(12)-RuvC(2) complex forms which resolves the HJ.</text>
</comment>
<comment type="subcellular location">
    <subcellularLocation>
        <location evidence="1">Cytoplasm</location>
    </subcellularLocation>
</comment>
<comment type="domain">
    <text evidence="1">Has 3 domains, the large (RuvB-L) and small ATPase (RuvB-S) domains and the C-terminal head (RuvB-H) domain. The head domain binds DNA, while the ATPase domains jointly bind ATP, ADP or are empty depending on the state of the subunit in the translocation cycle. During a single DNA translocation step the structure of each domain remains the same, but their relative positions change.</text>
</comment>
<comment type="similarity">
    <text evidence="1">Belongs to the RuvB family.</text>
</comment>
<reference key="1">
    <citation type="journal article" date="2009" name="Environ. Microbiol.">
        <title>The genome of Polaromonas naphthalenivorans strain CJ2, isolated from coal tar-contaminated sediment, reveals physiological and metabolic versatility and evolution through extensive horizontal gene transfer.</title>
        <authorList>
            <person name="Yagi J.M."/>
            <person name="Sims D."/>
            <person name="Brettin T."/>
            <person name="Bruce D."/>
            <person name="Madsen E.L."/>
        </authorList>
    </citation>
    <scope>NUCLEOTIDE SEQUENCE [LARGE SCALE GENOMIC DNA]</scope>
    <source>
        <strain>CJ2</strain>
    </source>
</reference>
<evidence type="ECO:0000255" key="1">
    <source>
        <dbReference type="HAMAP-Rule" id="MF_00016"/>
    </source>
</evidence>
<proteinExistence type="inferred from homology"/>
<organism>
    <name type="scientific">Polaromonas naphthalenivorans (strain CJ2)</name>
    <dbReference type="NCBI Taxonomy" id="365044"/>
    <lineage>
        <taxon>Bacteria</taxon>
        <taxon>Pseudomonadati</taxon>
        <taxon>Pseudomonadota</taxon>
        <taxon>Betaproteobacteria</taxon>
        <taxon>Burkholderiales</taxon>
        <taxon>Comamonadaceae</taxon>
        <taxon>Polaromonas</taxon>
    </lineage>
</organism>
<dbReference type="EC" id="3.6.4.-" evidence="1"/>
<dbReference type="EMBL" id="CP000529">
    <property type="protein sequence ID" value="ABM35833.1"/>
    <property type="molecule type" value="Genomic_DNA"/>
</dbReference>
<dbReference type="RefSeq" id="WP_011799933.1">
    <property type="nucleotide sequence ID" value="NC_008781.1"/>
</dbReference>
<dbReference type="SMR" id="A1VJK5"/>
<dbReference type="STRING" id="365044.Pnap_0512"/>
<dbReference type="KEGG" id="pna:Pnap_0512"/>
<dbReference type="eggNOG" id="COG2255">
    <property type="taxonomic scope" value="Bacteria"/>
</dbReference>
<dbReference type="HOGENOM" id="CLU_055599_1_0_4"/>
<dbReference type="OrthoDB" id="9804478at2"/>
<dbReference type="Proteomes" id="UP000000644">
    <property type="component" value="Chromosome"/>
</dbReference>
<dbReference type="GO" id="GO:0005737">
    <property type="term" value="C:cytoplasm"/>
    <property type="evidence" value="ECO:0007669"/>
    <property type="project" value="UniProtKB-SubCell"/>
</dbReference>
<dbReference type="GO" id="GO:0048476">
    <property type="term" value="C:Holliday junction resolvase complex"/>
    <property type="evidence" value="ECO:0007669"/>
    <property type="project" value="UniProtKB-UniRule"/>
</dbReference>
<dbReference type="GO" id="GO:0005524">
    <property type="term" value="F:ATP binding"/>
    <property type="evidence" value="ECO:0007669"/>
    <property type="project" value="UniProtKB-UniRule"/>
</dbReference>
<dbReference type="GO" id="GO:0016887">
    <property type="term" value="F:ATP hydrolysis activity"/>
    <property type="evidence" value="ECO:0007669"/>
    <property type="project" value="InterPro"/>
</dbReference>
<dbReference type="GO" id="GO:0000400">
    <property type="term" value="F:four-way junction DNA binding"/>
    <property type="evidence" value="ECO:0007669"/>
    <property type="project" value="UniProtKB-UniRule"/>
</dbReference>
<dbReference type="GO" id="GO:0009378">
    <property type="term" value="F:four-way junction helicase activity"/>
    <property type="evidence" value="ECO:0007669"/>
    <property type="project" value="InterPro"/>
</dbReference>
<dbReference type="GO" id="GO:0006310">
    <property type="term" value="P:DNA recombination"/>
    <property type="evidence" value="ECO:0007669"/>
    <property type="project" value="UniProtKB-UniRule"/>
</dbReference>
<dbReference type="GO" id="GO:0006281">
    <property type="term" value="P:DNA repair"/>
    <property type="evidence" value="ECO:0007669"/>
    <property type="project" value="UniProtKB-UniRule"/>
</dbReference>
<dbReference type="CDD" id="cd00009">
    <property type="entry name" value="AAA"/>
    <property type="match status" value="1"/>
</dbReference>
<dbReference type="FunFam" id="1.10.10.10:FF:000086">
    <property type="entry name" value="Holliday junction ATP-dependent DNA helicase RuvB"/>
    <property type="match status" value="1"/>
</dbReference>
<dbReference type="FunFam" id="1.10.8.60:FF:000023">
    <property type="entry name" value="Holliday junction ATP-dependent DNA helicase RuvB"/>
    <property type="match status" value="1"/>
</dbReference>
<dbReference type="FunFam" id="3.40.50.300:FF:000073">
    <property type="entry name" value="Holliday junction ATP-dependent DNA helicase RuvB"/>
    <property type="match status" value="1"/>
</dbReference>
<dbReference type="Gene3D" id="1.10.8.60">
    <property type="match status" value="1"/>
</dbReference>
<dbReference type="Gene3D" id="3.40.50.300">
    <property type="entry name" value="P-loop containing nucleotide triphosphate hydrolases"/>
    <property type="match status" value="1"/>
</dbReference>
<dbReference type="Gene3D" id="1.10.10.10">
    <property type="entry name" value="Winged helix-like DNA-binding domain superfamily/Winged helix DNA-binding domain"/>
    <property type="match status" value="1"/>
</dbReference>
<dbReference type="HAMAP" id="MF_00016">
    <property type="entry name" value="DNA_HJ_migration_RuvB"/>
    <property type="match status" value="1"/>
</dbReference>
<dbReference type="InterPro" id="IPR003593">
    <property type="entry name" value="AAA+_ATPase"/>
</dbReference>
<dbReference type="InterPro" id="IPR041445">
    <property type="entry name" value="AAA_lid_4"/>
</dbReference>
<dbReference type="InterPro" id="IPR004605">
    <property type="entry name" value="DNA_helicase_Holl-junc_RuvB"/>
</dbReference>
<dbReference type="InterPro" id="IPR027417">
    <property type="entry name" value="P-loop_NTPase"/>
</dbReference>
<dbReference type="InterPro" id="IPR008824">
    <property type="entry name" value="RuvB-like_N"/>
</dbReference>
<dbReference type="InterPro" id="IPR008823">
    <property type="entry name" value="RuvB_C"/>
</dbReference>
<dbReference type="InterPro" id="IPR036388">
    <property type="entry name" value="WH-like_DNA-bd_sf"/>
</dbReference>
<dbReference type="InterPro" id="IPR036390">
    <property type="entry name" value="WH_DNA-bd_sf"/>
</dbReference>
<dbReference type="NCBIfam" id="NF000868">
    <property type="entry name" value="PRK00080.1"/>
    <property type="match status" value="1"/>
</dbReference>
<dbReference type="NCBIfam" id="TIGR00635">
    <property type="entry name" value="ruvB"/>
    <property type="match status" value="1"/>
</dbReference>
<dbReference type="PANTHER" id="PTHR42848">
    <property type="match status" value="1"/>
</dbReference>
<dbReference type="PANTHER" id="PTHR42848:SF1">
    <property type="entry name" value="HOLLIDAY JUNCTION BRANCH MIGRATION COMPLEX SUBUNIT RUVB"/>
    <property type="match status" value="1"/>
</dbReference>
<dbReference type="Pfam" id="PF17864">
    <property type="entry name" value="AAA_lid_4"/>
    <property type="match status" value="1"/>
</dbReference>
<dbReference type="Pfam" id="PF05491">
    <property type="entry name" value="RuvB_C"/>
    <property type="match status" value="1"/>
</dbReference>
<dbReference type="Pfam" id="PF05496">
    <property type="entry name" value="RuvB_N"/>
    <property type="match status" value="1"/>
</dbReference>
<dbReference type="SMART" id="SM00382">
    <property type="entry name" value="AAA"/>
    <property type="match status" value="1"/>
</dbReference>
<dbReference type="SUPFAM" id="SSF52540">
    <property type="entry name" value="P-loop containing nucleoside triphosphate hydrolases"/>
    <property type="match status" value="1"/>
</dbReference>
<dbReference type="SUPFAM" id="SSF46785">
    <property type="entry name" value="Winged helix' DNA-binding domain"/>
    <property type="match status" value="1"/>
</dbReference>
<sequence>MTIQTDDFDMSDLPPARRMLSAAPASPKEEAIERALRPKLFDDYVGQTKAREQLEIFIGAANKRQEALDHVLLFGPPGLGKTTLSHIIAHELGVNMRSTSGPVLEKPKDLAALLTNLEKNDVLFIDEIHRLSPVVEEILYPALEDYQIDIMIGEGPAARSIKLDLQPFTLVGATTRAGMLTNPLRDRFGIVARLEFYTPEELARIVKRSAGLLNAPMDAEGGFEIARRSRGTPRIANRLLRRVRDYADVKGNGTITLDIANRALAMLDVDPQGFDLMDRKFLEAVILRFDGGPVGLDNIAASIGEESGTIEDVIEPYLIQQGFLQRTPRGRIATLAAYRHLGVAPPRGNAENLFEE</sequence>
<accession>A1VJK5</accession>
<feature type="chain" id="PRO_0000322828" description="Holliday junction branch migration complex subunit RuvB">
    <location>
        <begin position="1"/>
        <end position="356"/>
    </location>
</feature>
<feature type="region of interest" description="Large ATPase domain (RuvB-L)" evidence="1">
    <location>
        <begin position="13"/>
        <end position="197"/>
    </location>
</feature>
<feature type="region of interest" description="Small ATPAse domain (RuvB-S)" evidence="1">
    <location>
        <begin position="198"/>
        <end position="268"/>
    </location>
</feature>
<feature type="region of interest" description="Head domain (RuvB-H)" evidence="1">
    <location>
        <begin position="271"/>
        <end position="356"/>
    </location>
</feature>
<feature type="binding site" evidence="1">
    <location>
        <position position="36"/>
    </location>
    <ligand>
        <name>ATP</name>
        <dbReference type="ChEBI" id="CHEBI:30616"/>
    </ligand>
</feature>
<feature type="binding site" evidence="1">
    <location>
        <position position="37"/>
    </location>
    <ligand>
        <name>ATP</name>
        <dbReference type="ChEBI" id="CHEBI:30616"/>
    </ligand>
</feature>
<feature type="binding site" evidence="1">
    <location>
        <position position="78"/>
    </location>
    <ligand>
        <name>ATP</name>
        <dbReference type="ChEBI" id="CHEBI:30616"/>
    </ligand>
</feature>
<feature type="binding site" evidence="1">
    <location>
        <position position="81"/>
    </location>
    <ligand>
        <name>ATP</name>
        <dbReference type="ChEBI" id="CHEBI:30616"/>
    </ligand>
</feature>
<feature type="binding site" evidence="1">
    <location>
        <position position="82"/>
    </location>
    <ligand>
        <name>ATP</name>
        <dbReference type="ChEBI" id="CHEBI:30616"/>
    </ligand>
</feature>
<feature type="binding site" evidence="1">
    <location>
        <position position="82"/>
    </location>
    <ligand>
        <name>Mg(2+)</name>
        <dbReference type="ChEBI" id="CHEBI:18420"/>
    </ligand>
</feature>
<feature type="binding site" evidence="1">
    <location>
        <position position="83"/>
    </location>
    <ligand>
        <name>ATP</name>
        <dbReference type="ChEBI" id="CHEBI:30616"/>
    </ligand>
</feature>
<feature type="binding site" evidence="1">
    <location>
        <begin position="144"/>
        <end position="146"/>
    </location>
    <ligand>
        <name>ATP</name>
        <dbReference type="ChEBI" id="CHEBI:30616"/>
    </ligand>
</feature>
<feature type="binding site" evidence="1">
    <location>
        <position position="187"/>
    </location>
    <ligand>
        <name>ATP</name>
        <dbReference type="ChEBI" id="CHEBI:30616"/>
    </ligand>
</feature>
<feature type="binding site" evidence="1">
    <location>
        <position position="197"/>
    </location>
    <ligand>
        <name>ATP</name>
        <dbReference type="ChEBI" id="CHEBI:30616"/>
    </ligand>
</feature>
<feature type="binding site" evidence="1">
    <location>
        <position position="234"/>
    </location>
    <ligand>
        <name>ATP</name>
        <dbReference type="ChEBI" id="CHEBI:30616"/>
    </ligand>
</feature>
<feature type="binding site" evidence="1">
    <location>
        <position position="326"/>
    </location>
    <ligand>
        <name>DNA</name>
        <dbReference type="ChEBI" id="CHEBI:16991"/>
    </ligand>
</feature>
<feature type="binding site" evidence="1">
    <location>
        <position position="331"/>
    </location>
    <ligand>
        <name>DNA</name>
        <dbReference type="ChEBI" id="CHEBI:16991"/>
    </ligand>
</feature>